<keyword id="KW-0963">Cytoplasm</keyword>
<evidence type="ECO:0000255" key="1">
    <source>
        <dbReference type="HAMAP-Rule" id="MF_00795"/>
    </source>
</evidence>
<proteinExistence type="inferred from homology"/>
<organism>
    <name type="scientific">Porphyromonas gingivalis (strain ATCC 33277 / DSM 20709 / CIP 103683 / JCM 12257 / NCTC 11834 / 2561)</name>
    <dbReference type="NCBI Taxonomy" id="431947"/>
    <lineage>
        <taxon>Bacteria</taxon>
        <taxon>Pseudomonadati</taxon>
        <taxon>Bacteroidota</taxon>
        <taxon>Bacteroidia</taxon>
        <taxon>Bacteroidales</taxon>
        <taxon>Porphyromonadaceae</taxon>
        <taxon>Porphyromonas</taxon>
    </lineage>
</organism>
<accession>B2RIS4</accession>
<dbReference type="EMBL" id="AP009380">
    <property type="protein sequence ID" value="BAG33269.1"/>
    <property type="molecule type" value="Genomic_DNA"/>
</dbReference>
<dbReference type="RefSeq" id="WP_012457751.1">
    <property type="nucleotide sequence ID" value="NC_010729.1"/>
</dbReference>
<dbReference type="SMR" id="B2RIS4"/>
<dbReference type="GeneID" id="29255971"/>
<dbReference type="KEGG" id="pgn:PGN_0750"/>
<dbReference type="eggNOG" id="COG3142">
    <property type="taxonomic scope" value="Bacteria"/>
</dbReference>
<dbReference type="HOGENOM" id="CLU_050555_3_2_10"/>
<dbReference type="OrthoDB" id="9815677at2"/>
<dbReference type="BioCyc" id="PGIN431947:G1G2V-822-MONOMER"/>
<dbReference type="Proteomes" id="UP000008842">
    <property type="component" value="Chromosome"/>
</dbReference>
<dbReference type="GO" id="GO:0005737">
    <property type="term" value="C:cytoplasm"/>
    <property type="evidence" value="ECO:0007669"/>
    <property type="project" value="UniProtKB-SubCell"/>
</dbReference>
<dbReference type="GO" id="GO:0005507">
    <property type="term" value="F:copper ion binding"/>
    <property type="evidence" value="ECO:0007669"/>
    <property type="project" value="TreeGrafter"/>
</dbReference>
<dbReference type="FunFam" id="3.20.20.380:FF:000001">
    <property type="entry name" value="Copper homeostasis protein CutC"/>
    <property type="match status" value="1"/>
</dbReference>
<dbReference type="Gene3D" id="3.20.20.380">
    <property type="entry name" value="Copper homeostasis (CutC) domain"/>
    <property type="match status" value="1"/>
</dbReference>
<dbReference type="HAMAP" id="MF_00795">
    <property type="entry name" value="CutC"/>
    <property type="match status" value="1"/>
</dbReference>
<dbReference type="InterPro" id="IPR005627">
    <property type="entry name" value="CutC-like"/>
</dbReference>
<dbReference type="InterPro" id="IPR036822">
    <property type="entry name" value="CutC-like_dom_sf"/>
</dbReference>
<dbReference type="PANTHER" id="PTHR12598">
    <property type="entry name" value="COPPER HOMEOSTASIS PROTEIN CUTC"/>
    <property type="match status" value="1"/>
</dbReference>
<dbReference type="PANTHER" id="PTHR12598:SF0">
    <property type="entry name" value="COPPER HOMEOSTASIS PROTEIN CUTC HOMOLOG"/>
    <property type="match status" value="1"/>
</dbReference>
<dbReference type="Pfam" id="PF03932">
    <property type="entry name" value="CutC"/>
    <property type="match status" value="1"/>
</dbReference>
<dbReference type="SUPFAM" id="SSF110395">
    <property type="entry name" value="CutC-like"/>
    <property type="match status" value="1"/>
</dbReference>
<gene>
    <name evidence="1" type="primary">cutC</name>
    <name type="ordered locus">PGN_0750</name>
</gene>
<name>CUTC_PORG3</name>
<sequence>MAMQLEICANSATSCQQAELGGATRVELCAGIPEGGTTPSAGEMAVARSLIAIPIHVIIRPRAGDFVYSSEEIEAMCYDIRVVRSLGMEGVVFGCLTPEGGYDEEANSRLLKEAQGMQLTFHRAFDVCAAPFEMLEKLIATGFHRVLTSGCAPTALEGKDMIGALNKQAAGRIGIMAGCGIRLGNIETLARHTGITQFHSSLRHDIPSSMRFRRPEVSMGGTVKIDEYSRPETSADMVRQAVDILQGI</sequence>
<reference key="1">
    <citation type="journal article" date="2008" name="DNA Res.">
        <title>Determination of the genome sequence of Porphyromonas gingivalis strain ATCC 33277 and genomic comparison with strain W83 revealed extensive genome rearrangements in P. gingivalis.</title>
        <authorList>
            <person name="Naito M."/>
            <person name="Hirakawa H."/>
            <person name="Yamashita A."/>
            <person name="Ohara N."/>
            <person name="Shoji M."/>
            <person name="Yukitake H."/>
            <person name="Nakayama K."/>
            <person name="Toh H."/>
            <person name="Yoshimura F."/>
            <person name="Kuhara S."/>
            <person name="Hattori M."/>
            <person name="Hayashi T."/>
            <person name="Nakayama K."/>
        </authorList>
    </citation>
    <scope>NUCLEOTIDE SEQUENCE [LARGE SCALE GENOMIC DNA]</scope>
    <source>
        <strain>ATCC 33277 / DSM 20709 / CIP 103683 / JCM 12257 / NCTC 11834 / 2561</strain>
    </source>
</reference>
<comment type="subcellular location">
    <subcellularLocation>
        <location evidence="1">Cytoplasm</location>
    </subcellularLocation>
</comment>
<comment type="similarity">
    <text evidence="1">Belongs to the CutC family.</text>
</comment>
<comment type="caution">
    <text evidence="1">Once thought to be involved in copper homeostasis, experiments in E.coli have shown this is not the case.</text>
</comment>
<feature type="chain" id="PRO_1000133840" description="PF03932 family protein CutC">
    <location>
        <begin position="1"/>
        <end position="248"/>
    </location>
</feature>
<protein>
    <recommendedName>
        <fullName evidence="1">PF03932 family protein CutC</fullName>
    </recommendedName>
</protein>